<sequence length="250" mass="28121">MINLKIEENVKESQNVNTLYFNWDQDIRPGQFAMIWIPGYGEIPMSFSGLGRRKSITVKAYGSASRKLTELKAGDDLFLRGPYGNGFDVREGRKLLVGGGSGIVSLYPIADQETDALISAKTRDELIFKDRFPESRRFIATDDGSDGFHGFAHELLQRINIDSYEAIYVCGPEQMMYKVLQVLKGRKVFVQFSLERTMKCGIGICDSCSLGGKQVCKEGPVFNIEELIGNPEFGVYRTTYSGRRIRLNVK</sequence>
<proteinExistence type="inferred from homology"/>
<feature type="chain" id="PRO_0000148384" description="Probable dihydroorotate dehydrogenase B (NAD(+)), electron transfer subunit">
    <location>
        <begin position="1"/>
        <end position="250"/>
    </location>
</feature>
<feature type="domain" description="FAD-binding FR-type" evidence="1">
    <location>
        <begin position="1"/>
        <end position="89"/>
    </location>
</feature>
<feature type="binding site" evidence="1">
    <location>
        <position position="200"/>
    </location>
    <ligand>
        <name>[2Fe-2S] cluster</name>
        <dbReference type="ChEBI" id="CHEBI:190135"/>
    </ligand>
</feature>
<feature type="binding site" evidence="1">
    <location>
        <position position="205"/>
    </location>
    <ligand>
        <name>[2Fe-2S] cluster</name>
        <dbReference type="ChEBI" id="CHEBI:190135"/>
    </ligand>
</feature>
<feature type="binding site" evidence="1">
    <location>
        <position position="208"/>
    </location>
    <ligand>
        <name>[2Fe-2S] cluster</name>
        <dbReference type="ChEBI" id="CHEBI:190135"/>
    </ligand>
</feature>
<feature type="binding site" evidence="1">
    <location>
        <position position="216"/>
    </location>
    <ligand>
        <name>[2Fe-2S] cluster</name>
        <dbReference type="ChEBI" id="CHEBI:190135"/>
    </ligand>
</feature>
<accession>Q979G5</accession>
<comment type="function">
    <text evidence="1">Responsible for channeling the electrons from the oxidation of dihydroorotate from the FMN redox center in the PyrD type B subunit to the ultimate electron acceptor NAD(+).</text>
</comment>
<comment type="cofactor">
    <cofactor evidence="1">
        <name>[2Fe-2S] cluster</name>
        <dbReference type="ChEBI" id="CHEBI:190135"/>
    </cofactor>
    <text evidence="1">Binds 1 [2Fe-2S] cluster per subunit.</text>
</comment>
<comment type="cofactor">
    <cofactor evidence="1">
        <name>FAD</name>
        <dbReference type="ChEBI" id="CHEBI:57692"/>
    </cofactor>
    <text evidence="1">Binds 1 FAD per subunit.</text>
</comment>
<comment type="pathway">
    <text evidence="1">Pyrimidine metabolism; UMP biosynthesis via de novo pathway; orotate from (S)-dihydroorotate (NAD(+) route): step 1/1.</text>
</comment>
<comment type="subunit">
    <text evidence="1">Heterotetramer of 2 PyrK and 2 PyrD type B subunits.</text>
</comment>
<comment type="similarity">
    <text evidence="1">Belongs to the PyrK family.</text>
</comment>
<gene>
    <name evidence="1" type="primary">pyrK</name>
    <name type="ordered locus">TV1196</name>
    <name type="ORF">TVG1225518</name>
</gene>
<protein>
    <recommendedName>
        <fullName evidence="1">Probable dihydroorotate dehydrogenase B (NAD(+)), electron transfer subunit</fullName>
    </recommendedName>
    <alternativeName>
        <fullName evidence="1">Dihydroorotate oxidase B, electron transfer subunit</fullName>
    </alternativeName>
</protein>
<organism>
    <name type="scientific">Thermoplasma volcanium (strain ATCC 51530 / DSM 4299 / JCM 9571 / NBRC 15438 / GSS1)</name>
    <dbReference type="NCBI Taxonomy" id="273116"/>
    <lineage>
        <taxon>Archaea</taxon>
        <taxon>Methanobacteriati</taxon>
        <taxon>Thermoplasmatota</taxon>
        <taxon>Thermoplasmata</taxon>
        <taxon>Thermoplasmatales</taxon>
        <taxon>Thermoplasmataceae</taxon>
        <taxon>Thermoplasma</taxon>
    </lineage>
</organism>
<keyword id="KW-0001">2Fe-2S</keyword>
<keyword id="KW-0249">Electron transport</keyword>
<keyword id="KW-0274">FAD</keyword>
<keyword id="KW-0285">Flavoprotein</keyword>
<keyword id="KW-0408">Iron</keyword>
<keyword id="KW-0411">Iron-sulfur</keyword>
<keyword id="KW-0479">Metal-binding</keyword>
<keyword id="KW-0665">Pyrimidine biosynthesis</keyword>
<keyword id="KW-0813">Transport</keyword>
<evidence type="ECO:0000255" key="1">
    <source>
        <dbReference type="HAMAP-Rule" id="MF_01211"/>
    </source>
</evidence>
<dbReference type="EMBL" id="BA000011">
    <property type="protein sequence ID" value="BAB60338.1"/>
    <property type="molecule type" value="Genomic_DNA"/>
</dbReference>
<dbReference type="RefSeq" id="WP_010917429.1">
    <property type="nucleotide sequence ID" value="NC_002689.2"/>
</dbReference>
<dbReference type="SMR" id="Q979G5"/>
<dbReference type="STRING" id="273116.gene:9381997"/>
<dbReference type="PaxDb" id="273116-14325434"/>
<dbReference type="DNASU" id="1441311"/>
<dbReference type="GeneID" id="1441311"/>
<dbReference type="KEGG" id="tvo:TVG1225518"/>
<dbReference type="eggNOG" id="arCOG02199">
    <property type="taxonomic scope" value="Archaea"/>
</dbReference>
<dbReference type="HOGENOM" id="CLU_003827_1_1_2"/>
<dbReference type="OrthoDB" id="35401at2157"/>
<dbReference type="PhylomeDB" id="Q979G5"/>
<dbReference type="UniPathway" id="UPA00070">
    <property type="reaction ID" value="UER00945"/>
</dbReference>
<dbReference type="Proteomes" id="UP000001017">
    <property type="component" value="Chromosome"/>
</dbReference>
<dbReference type="GO" id="GO:0051537">
    <property type="term" value="F:2 iron, 2 sulfur cluster binding"/>
    <property type="evidence" value="ECO:0007669"/>
    <property type="project" value="UniProtKB-KW"/>
</dbReference>
<dbReference type="GO" id="GO:0009055">
    <property type="term" value="F:electron transfer activity"/>
    <property type="evidence" value="ECO:0007669"/>
    <property type="project" value="UniProtKB-UniRule"/>
</dbReference>
<dbReference type="GO" id="GO:0050660">
    <property type="term" value="F:flavin adenine dinucleotide binding"/>
    <property type="evidence" value="ECO:0007669"/>
    <property type="project" value="InterPro"/>
</dbReference>
<dbReference type="GO" id="GO:0046872">
    <property type="term" value="F:metal ion binding"/>
    <property type="evidence" value="ECO:0007669"/>
    <property type="project" value="UniProtKB-KW"/>
</dbReference>
<dbReference type="GO" id="GO:0016491">
    <property type="term" value="F:oxidoreductase activity"/>
    <property type="evidence" value="ECO:0007669"/>
    <property type="project" value="InterPro"/>
</dbReference>
<dbReference type="GO" id="GO:0044205">
    <property type="term" value="P:'de novo' UMP biosynthetic process"/>
    <property type="evidence" value="ECO:0007669"/>
    <property type="project" value="UniProtKB-UniRule"/>
</dbReference>
<dbReference type="CDD" id="cd06220">
    <property type="entry name" value="DHOD_e_trans_like2"/>
    <property type="match status" value="1"/>
</dbReference>
<dbReference type="Gene3D" id="2.10.240.10">
    <property type="entry name" value="Dihydroorotate dehydrogenase, electron transfer subunit"/>
    <property type="match status" value="1"/>
</dbReference>
<dbReference type="Gene3D" id="3.40.50.80">
    <property type="entry name" value="Nucleotide-binding domain of ferredoxin-NADP reductase (FNR) module"/>
    <property type="match status" value="1"/>
</dbReference>
<dbReference type="Gene3D" id="2.40.30.10">
    <property type="entry name" value="Translation factors"/>
    <property type="match status" value="1"/>
</dbReference>
<dbReference type="HAMAP" id="MF_01211">
    <property type="entry name" value="DHODB_Fe_S_bind"/>
    <property type="match status" value="1"/>
</dbReference>
<dbReference type="InterPro" id="IPR012165">
    <property type="entry name" value="Cyt_c3_hydrogenase_gsu"/>
</dbReference>
<dbReference type="InterPro" id="IPR037117">
    <property type="entry name" value="Dihydroorotate_DH_ele_sf"/>
</dbReference>
<dbReference type="InterPro" id="IPR019480">
    <property type="entry name" value="Dihydroorotate_DH_Fe-S-bd"/>
</dbReference>
<dbReference type="InterPro" id="IPR023455">
    <property type="entry name" value="Dihydroorotate_DHASE_ETsu"/>
</dbReference>
<dbReference type="InterPro" id="IPR017927">
    <property type="entry name" value="FAD-bd_FR_type"/>
</dbReference>
<dbReference type="InterPro" id="IPR039261">
    <property type="entry name" value="FNR_nucleotide-bd"/>
</dbReference>
<dbReference type="InterPro" id="IPR050353">
    <property type="entry name" value="PyrK_electron_transfer"/>
</dbReference>
<dbReference type="InterPro" id="IPR017938">
    <property type="entry name" value="Riboflavin_synthase-like_b-brl"/>
</dbReference>
<dbReference type="NCBIfam" id="NF000796">
    <property type="entry name" value="PRK00054.1-1"/>
    <property type="match status" value="1"/>
</dbReference>
<dbReference type="PANTHER" id="PTHR43513">
    <property type="entry name" value="DIHYDROOROTATE DEHYDROGENASE B (NAD(+)), ELECTRON TRANSFER SUBUNIT"/>
    <property type="match status" value="1"/>
</dbReference>
<dbReference type="PANTHER" id="PTHR43513:SF3">
    <property type="entry name" value="DIHYDROOROTATE DEHYDROGENASE B (NAD(+)), ELECTRON TRANSFER SUBUNIT-RELATED"/>
    <property type="match status" value="1"/>
</dbReference>
<dbReference type="Pfam" id="PF10418">
    <property type="entry name" value="DHODB_Fe-S_bind"/>
    <property type="match status" value="1"/>
</dbReference>
<dbReference type="PIRSF" id="PIRSF006816">
    <property type="entry name" value="Cyc3_hyd_g"/>
    <property type="match status" value="1"/>
</dbReference>
<dbReference type="SUPFAM" id="SSF52343">
    <property type="entry name" value="Ferredoxin reductase-like, C-terminal NADP-linked domain"/>
    <property type="match status" value="1"/>
</dbReference>
<dbReference type="SUPFAM" id="SSF63380">
    <property type="entry name" value="Riboflavin synthase domain-like"/>
    <property type="match status" value="1"/>
</dbReference>
<dbReference type="PROSITE" id="PS51384">
    <property type="entry name" value="FAD_FR"/>
    <property type="match status" value="1"/>
</dbReference>
<reference key="1">
    <citation type="journal article" date="2000" name="Proc. Natl. Acad. Sci. U.S.A.">
        <title>Archaeal adaptation to higher temperatures revealed by genomic sequence of Thermoplasma volcanium.</title>
        <authorList>
            <person name="Kawashima T."/>
            <person name="Amano N."/>
            <person name="Koike H."/>
            <person name="Makino S."/>
            <person name="Higuchi S."/>
            <person name="Kawashima-Ohya Y."/>
            <person name="Watanabe K."/>
            <person name="Yamazaki M."/>
            <person name="Kanehori K."/>
            <person name="Kawamoto T."/>
            <person name="Nunoshiba T."/>
            <person name="Yamamoto Y."/>
            <person name="Aramaki H."/>
            <person name="Makino K."/>
            <person name="Suzuki M."/>
        </authorList>
    </citation>
    <scope>NUCLEOTIDE SEQUENCE [LARGE SCALE GENOMIC DNA]</scope>
    <source>
        <strain>ATCC 51530 / DSM 4299 / JCM 9571 / NBRC 15438 / GSS1</strain>
    </source>
</reference>
<name>PYRK_THEVO</name>